<keyword id="KW-0186">Copper</keyword>
<keyword id="KW-0249">Electron transport</keyword>
<keyword id="KW-0460">Magnesium</keyword>
<keyword id="KW-0472">Membrane</keyword>
<keyword id="KW-0479">Metal-binding</keyword>
<keyword id="KW-0496">Mitochondrion</keyword>
<keyword id="KW-0999">Mitochondrion inner membrane</keyword>
<keyword id="KW-0679">Respiratory chain</keyword>
<keyword id="KW-1278">Translocase</keyword>
<keyword id="KW-0812">Transmembrane</keyword>
<keyword id="KW-1133">Transmembrane helix</keyword>
<keyword id="KW-0813">Transport</keyword>
<sequence>MAYPLQLGLQDASSPIMEELMNFHDHTLMIVFLISSLVLYLISLMLTTKLIHTSTMDAQEVETVWTILPAIILILIALPSLRILYMMDEINNPVLTVKTMGHQWYWSYEYTDFEDLSFDSYMIPTNELKPGELRQLEVDNRMVLPMELPIRMLISSEDVLHSWAVPSLGLKTDAIPGRLNQATVTSNRPGVFYGQCSEICGSNHSFMPIVLEMIPLKLFENWSLSLT</sequence>
<dbReference type="EC" id="7.1.1.9"/>
<dbReference type="EMBL" id="DQ019085">
    <property type="protein sequence ID" value="ABA28347.1"/>
    <property type="molecule type" value="Genomic_DNA"/>
</dbReference>
<dbReference type="SMR" id="Q38S53"/>
<dbReference type="GO" id="GO:0005743">
    <property type="term" value="C:mitochondrial inner membrane"/>
    <property type="evidence" value="ECO:0007669"/>
    <property type="project" value="UniProtKB-SubCell"/>
</dbReference>
<dbReference type="GO" id="GO:0045277">
    <property type="term" value="C:respiratory chain complex IV"/>
    <property type="evidence" value="ECO:0000250"/>
    <property type="project" value="UniProtKB"/>
</dbReference>
<dbReference type="GO" id="GO:0005507">
    <property type="term" value="F:copper ion binding"/>
    <property type="evidence" value="ECO:0007669"/>
    <property type="project" value="InterPro"/>
</dbReference>
<dbReference type="GO" id="GO:0004129">
    <property type="term" value="F:cytochrome-c oxidase activity"/>
    <property type="evidence" value="ECO:0007669"/>
    <property type="project" value="UniProtKB-EC"/>
</dbReference>
<dbReference type="GO" id="GO:0042773">
    <property type="term" value="P:ATP synthesis coupled electron transport"/>
    <property type="evidence" value="ECO:0007669"/>
    <property type="project" value="TreeGrafter"/>
</dbReference>
<dbReference type="CDD" id="cd13912">
    <property type="entry name" value="CcO_II_C"/>
    <property type="match status" value="1"/>
</dbReference>
<dbReference type="FunFam" id="1.10.287.90:FF:000001">
    <property type="entry name" value="Cytochrome c oxidase subunit 2"/>
    <property type="match status" value="1"/>
</dbReference>
<dbReference type="FunFam" id="2.60.40.420:FF:000001">
    <property type="entry name" value="Cytochrome c oxidase subunit 2"/>
    <property type="match status" value="1"/>
</dbReference>
<dbReference type="Gene3D" id="1.10.287.90">
    <property type="match status" value="1"/>
</dbReference>
<dbReference type="Gene3D" id="2.60.40.420">
    <property type="entry name" value="Cupredoxins - blue copper proteins"/>
    <property type="match status" value="1"/>
</dbReference>
<dbReference type="InterPro" id="IPR045187">
    <property type="entry name" value="CcO_II"/>
</dbReference>
<dbReference type="InterPro" id="IPR002429">
    <property type="entry name" value="CcO_II-like_C"/>
</dbReference>
<dbReference type="InterPro" id="IPR034210">
    <property type="entry name" value="CcO_II_C"/>
</dbReference>
<dbReference type="InterPro" id="IPR001505">
    <property type="entry name" value="Copper_CuA"/>
</dbReference>
<dbReference type="InterPro" id="IPR008972">
    <property type="entry name" value="Cupredoxin"/>
</dbReference>
<dbReference type="InterPro" id="IPR014222">
    <property type="entry name" value="Cyt_c_oxidase_su2"/>
</dbReference>
<dbReference type="InterPro" id="IPR011759">
    <property type="entry name" value="Cyt_c_oxidase_su2_TM_dom"/>
</dbReference>
<dbReference type="InterPro" id="IPR036257">
    <property type="entry name" value="Cyt_c_oxidase_su2_TM_sf"/>
</dbReference>
<dbReference type="NCBIfam" id="TIGR02866">
    <property type="entry name" value="CoxB"/>
    <property type="match status" value="1"/>
</dbReference>
<dbReference type="PANTHER" id="PTHR22888:SF9">
    <property type="entry name" value="CYTOCHROME C OXIDASE SUBUNIT 2"/>
    <property type="match status" value="1"/>
</dbReference>
<dbReference type="PANTHER" id="PTHR22888">
    <property type="entry name" value="CYTOCHROME C OXIDASE, SUBUNIT II"/>
    <property type="match status" value="1"/>
</dbReference>
<dbReference type="Pfam" id="PF00116">
    <property type="entry name" value="COX2"/>
    <property type="match status" value="1"/>
</dbReference>
<dbReference type="Pfam" id="PF02790">
    <property type="entry name" value="COX2_TM"/>
    <property type="match status" value="1"/>
</dbReference>
<dbReference type="PRINTS" id="PR01166">
    <property type="entry name" value="CYCOXIDASEII"/>
</dbReference>
<dbReference type="SUPFAM" id="SSF49503">
    <property type="entry name" value="Cupredoxins"/>
    <property type="match status" value="1"/>
</dbReference>
<dbReference type="SUPFAM" id="SSF81464">
    <property type="entry name" value="Cytochrome c oxidase subunit II-like, transmembrane region"/>
    <property type="match status" value="1"/>
</dbReference>
<dbReference type="PROSITE" id="PS00078">
    <property type="entry name" value="COX2"/>
    <property type="match status" value="1"/>
</dbReference>
<dbReference type="PROSITE" id="PS50857">
    <property type="entry name" value="COX2_CUA"/>
    <property type="match status" value="1"/>
</dbReference>
<dbReference type="PROSITE" id="PS50999">
    <property type="entry name" value="COX2_TM"/>
    <property type="match status" value="1"/>
</dbReference>
<accession>Q38S53</accession>
<evidence type="ECO:0000250" key="1">
    <source>
        <dbReference type="UniProtKB" id="P00403"/>
    </source>
</evidence>
<evidence type="ECO:0000250" key="2">
    <source>
        <dbReference type="UniProtKB" id="P00410"/>
    </source>
</evidence>
<evidence type="ECO:0000250" key="3">
    <source>
        <dbReference type="UniProtKB" id="P68530"/>
    </source>
</evidence>
<evidence type="ECO:0000305" key="4"/>
<reference key="1">
    <citation type="journal article" date="2005" name="Mol. Phylogenet. Evol.">
        <title>Multigene phylogeny of the Old World mice, Murinae, reveals distinct geographic lineages and the declining utility of mitochondrial genes compared to nuclear genes.</title>
        <authorList>
            <person name="Steppan S.J."/>
            <person name="Adkins R.M."/>
            <person name="Spinks P.Q."/>
            <person name="Hale C."/>
        </authorList>
    </citation>
    <scope>NUCLEOTIDE SEQUENCE [GENOMIC DNA]</scope>
</reference>
<feature type="chain" id="PRO_0000254943" description="Cytochrome c oxidase subunit 2">
    <location>
        <begin position="1"/>
        <end position="227"/>
    </location>
</feature>
<feature type="topological domain" description="Mitochondrial intermembrane" evidence="3">
    <location>
        <begin position="1"/>
        <end position="14"/>
    </location>
</feature>
<feature type="transmembrane region" description="Helical; Name=I" evidence="3">
    <location>
        <begin position="15"/>
        <end position="45"/>
    </location>
</feature>
<feature type="topological domain" description="Mitochondrial matrix" evidence="3">
    <location>
        <begin position="46"/>
        <end position="59"/>
    </location>
</feature>
<feature type="transmembrane region" description="Helical; Name=II" evidence="3">
    <location>
        <begin position="60"/>
        <end position="87"/>
    </location>
</feature>
<feature type="topological domain" description="Mitochondrial intermembrane" evidence="3">
    <location>
        <begin position="88"/>
        <end position="227"/>
    </location>
</feature>
<feature type="binding site" evidence="3">
    <location>
        <position position="161"/>
    </location>
    <ligand>
        <name>Cu cation</name>
        <dbReference type="ChEBI" id="CHEBI:23378"/>
        <label>A1</label>
    </ligand>
</feature>
<feature type="binding site" evidence="3">
    <location>
        <position position="196"/>
    </location>
    <ligand>
        <name>Cu cation</name>
        <dbReference type="ChEBI" id="CHEBI:23378"/>
        <label>A1</label>
    </ligand>
</feature>
<feature type="binding site" evidence="3">
    <location>
        <position position="196"/>
    </location>
    <ligand>
        <name>Cu cation</name>
        <dbReference type="ChEBI" id="CHEBI:23378"/>
        <label>A2</label>
    </ligand>
</feature>
<feature type="binding site" evidence="3">
    <location>
        <position position="198"/>
    </location>
    <ligand>
        <name>Cu cation</name>
        <dbReference type="ChEBI" id="CHEBI:23378"/>
        <label>A2</label>
    </ligand>
</feature>
<feature type="binding site" evidence="3">
    <location>
        <position position="198"/>
    </location>
    <ligand>
        <name>Mg(2+)</name>
        <dbReference type="ChEBI" id="CHEBI:18420"/>
        <note>ligand shared with MT-CO1</note>
    </ligand>
</feature>
<feature type="binding site" evidence="3">
    <location>
        <position position="200"/>
    </location>
    <ligand>
        <name>Cu cation</name>
        <dbReference type="ChEBI" id="CHEBI:23378"/>
        <label>A1</label>
    </ligand>
</feature>
<feature type="binding site" evidence="3">
    <location>
        <position position="200"/>
    </location>
    <ligand>
        <name>Cu cation</name>
        <dbReference type="ChEBI" id="CHEBI:23378"/>
        <label>A2</label>
    </ligand>
</feature>
<feature type="binding site" evidence="3">
    <location>
        <position position="204"/>
    </location>
    <ligand>
        <name>Cu cation</name>
        <dbReference type="ChEBI" id="CHEBI:23378"/>
        <label>A2</label>
    </ligand>
</feature>
<feature type="binding site" evidence="3">
    <location>
        <position position="207"/>
    </location>
    <ligand>
        <name>Cu cation</name>
        <dbReference type="ChEBI" id="CHEBI:23378"/>
        <label>A1</label>
    </ligand>
</feature>
<proteinExistence type="inferred from homology"/>
<protein>
    <recommendedName>
        <fullName>Cytochrome c oxidase subunit 2</fullName>
        <ecNumber>7.1.1.9</ecNumber>
    </recommendedName>
    <alternativeName>
        <fullName>Cytochrome c oxidase polypeptide II</fullName>
    </alternativeName>
</protein>
<gene>
    <name type="primary">MT-CO2</name>
    <name type="synonym">COII</name>
    <name type="synonym">COX2</name>
    <name type="synonym">COXII</name>
    <name type="synonym">MTCO2</name>
</gene>
<organism>
    <name type="scientific">Taterillus emini</name>
    <name type="common">Emin's gerbil</name>
    <dbReference type="NCBI Taxonomy" id="163696"/>
    <lineage>
        <taxon>Eukaryota</taxon>
        <taxon>Metazoa</taxon>
        <taxon>Chordata</taxon>
        <taxon>Craniata</taxon>
        <taxon>Vertebrata</taxon>
        <taxon>Euteleostomi</taxon>
        <taxon>Mammalia</taxon>
        <taxon>Eutheria</taxon>
        <taxon>Euarchontoglires</taxon>
        <taxon>Glires</taxon>
        <taxon>Rodentia</taxon>
        <taxon>Myomorpha</taxon>
        <taxon>Muroidea</taxon>
        <taxon>Muridae</taxon>
        <taxon>Gerbillinae</taxon>
        <taxon>Taterillus</taxon>
    </lineage>
</organism>
<name>COX2_TATEM</name>
<comment type="function">
    <text evidence="2">Component of the cytochrome c oxidase, the last enzyme in the mitochondrial electron transport chain which drives oxidative phosphorylation. The respiratory chain contains 3 multisubunit complexes succinate dehydrogenase (complex II, CII), ubiquinol-cytochrome c oxidoreductase (cytochrome b-c1 complex, complex III, CIII) and cytochrome c oxidase (complex IV, CIV), that cooperate to transfer electrons derived from NADH and succinate to molecular oxygen, creating an electrochemical gradient over the inner membrane that drives transmembrane transport and the ATP synthase. Cytochrome c oxidase is the component of the respiratory chain that catalyzes the reduction of oxygen to water. Electrons originating from reduced cytochrome c in the intermembrane space (IMS) are transferred via the dinuclear copper A center (CU(A)) of subunit 2 and heme A of subunit 1 to the active site in subunit 1, a binuclear center (BNC) formed by heme A3 and copper B (CU(B)). The BNC reduces molecular oxygen to 2 water molecules using 4 electrons from cytochrome c in the IMS and 4 protons from the mitochondrial matrix.</text>
</comment>
<comment type="catalytic activity">
    <reaction evidence="2">
        <text>4 Fe(II)-[cytochrome c] + O2 + 8 H(+)(in) = 4 Fe(III)-[cytochrome c] + 2 H2O + 4 H(+)(out)</text>
        <dbReference type="Rhea" id="RHEA:11436"/>
        <dbReference type="Rhea" id="RHEA-COMP:10350"/>
        <dbReference type="Rhea" id="RHEA-COMP:14399"/>
        <dbReference type="ChEBI" id="CHEBI:15377"/>
        <dbReference type="ChEBI" id="CHEBI:15378"/>
        <dbReference type="ChEBI" id="CHEBI:15379"/>
        <dbReference type="ChEBI" id="CHEBI:29033"/>
        <dbReference type="ChEBI" id="CHEBI:29034"/>
        <dbReference type="EC" id="7.1.1.9"/>
    </reaction>
    <physiologicalReaction direction="left-to-right" evidence="2">
        <dbReference type="Rhea" id="RHEA:11437"/>
    </physiologicalReaction>
</comment>
<comment type="cofactor">
    <cofactor evidence="3">
        <name>Cu cation</name>
        <dbReference type="ChEBI" id="CHEBI:23378"/>
    </cofactor>
    <text evidence="3">Binds a dinuclear copper A center per subunit.</text>
</comment>
<comment type="subunit">
    <text evidence="1 3">Component of the cytochrome c oxidase (complex IV, CIV), a multisubunit enzyme composed of 14 subunits. The complex is composed of a catalytic core of 3 subunits MT-CO1, MT-CO2 and MT-CO3, encoded in the mitochondrial DNA, and 11 supernumerary subunits COX4I, COX5A, COX5B, COX6A, COX6B, COX6C, COX7A, COX7B, COX7C, COX8 and NDUFA4, which are encoded in the nuclear genome. The complex exists as a monomer or a dimer and forms supercomplexes (SCs) in the inner mitochondrial membrane with NADH-ubiquinone oxidoreductase (complex I, CI) and ubiquinol-cytochrome c oxidoreductase (cytochrome b-c1 complex, complex III, CIII), resulting in different assemblies (supercomplex SCI(1)III(2)IV(1) and megacomplex MCI(2)III(2)IV(2)) (By similarity). Found in a complex with TMEM177, COA6, COX18, COX20, SCO1 and SCO2. Interacts with TMEM177 in a COX20-dependent manner. Interacts with COX20. Interacts with COX16 (By similarity).</text>
</comment>
<comment type="subcellular location">
    <subcellularLocation>
        <location evidence="3">Mitochondrion inner membrane</location>
        <topology evidence="3">Multi-pass membrane protein</topology>
    </subcellularLocation>
</comment>
<comment type="similarity">
    <text evidence="4">Belongs to the cytochrome c oxidase subunit 2 family.</text>
</comment>
<geneLocation type="mitochondrion"/>